<reference key="1">
    <citation type="submission" date="2005-07" db="EMBL/GenBank/DDBJ databases">
        <authorList>
            <person name="Mural R.J."/>
            <person name="Adams M.D."/>
            <person name="Myers E.W."/>
            <person name="Smith H.O."/>
            <person name="Venter J.C."/>
        </authorList>
    </citation>
    <scope>NUCLEOTIDE SEQUENCE [LARGE SCALE GENOMIC DNA]</scope>
    <source>
        <strain>Brown Norway</strain>
    </source>
</reference>
<accession>D4A6D7</accession>
<accession>D4A3Z0</accession>
<comment type="function">
    <text evidence="1">Required for the preservation of the structural and functional integrity of mitochondrial respiratory complex III by allowing the physiological turnover of the Rieske protein UQCRFS1. Involved in the clearance of UQCRFS1 N-terminal fragments, which are produced upon incorporation into the complex III and whose presence is detrimental for its catalytic activity.</text>
</comment>
<comment type="subunit">
    <text evidence="1 2">Binds to the mature mitochondrial complex III dimer, after the incorporation of the Rieske protein UQCRFS1. Interacts with UQCRC1 and UQCRFS1 (By similarity). Interacts with ZFYVE26 and CHMP4B.</text>
</comment>
<comment type="subcellular location">
    <subcellularLocation>
        <location evidence="1">Mitochondrion inner membrane</location>
    </subcellularLocation>
</comment>
<comment type="alternative products">
    <event type="alternative splicing"/>
    <isoform>
        <id>D4A6D7-1</id>
        <name>1</name>
        <sequence type="displayed"/>
    </isoform>
    <isoform>
        <id>D4A6D7-2</id>
        <name>2</name>
        <sequence type="described" ref="VSP_041059"/>
    </isoform>
</comment>
<comment type="PTM">
    <text evidence="1">Proteolytically cleaved by PARL.</text>
</comment>
<comment type="similarity">
    <text evidence="4">Belongs to the TTC19 family.</text>
</comment>
<feature type="transit peptide" description="Mitochondrion" evidence="3">
    <location>
        <begin position="1"/>
        <end position="52"/>
    </location>
</feature>
<feature type="chain" id="PRO_0000408354" description="Tetratricopeptide repeat protein 19, mitochondrial">
    <location>
        <begin position="53"/>
        <end position="365"/>
    </location>
</feature>
<feature type="repeat" description="TPR 1">
    <location>
        <begin position="127"/>
        <end position="160"/>
    </location>
</feature>
<feature type="repeat" description="TPR 2">
    <location>
        <begin position="170"/>
        <end position="203"/>
    </location>
</feature>
<feature type="repeat" description="TPR 3">
    <location>
        <begin position="220"/>
        <end position="260"/>
    </location>
</feature>
<feature type="repeat" description="TPR 4">
    <location>
        <begin position="269"/>
        <end position="302"/>
    </location>
</feature>
<feature type="repeat" description="TPR 5">
    <location>
        <begin position="308"/>
        <end position="341"/>
    </location>
</feature>
<feature type="site" description="Cleavage; by PARL" evidence="1">
    <location>
        <begin position="70"/>
        <end position="71"/>
    </location>
</feature>
<feature type="splice variant" id="VSP_041059" description="In isoform 2." evidence="4">
    <location>
        <begin position="133"/>
        <end position="145"/>
    </location>
</feature>
<protein>
    <recommendedName>
        <fullName>Tetratricopeptide repeat protein 19, mitochondrial</fullName>
        <shortName>TPR repeat protein 19</shortName>
    </recommendedName>
</protein>
<proteinExistence type="inferred from homology"/>
<evidence type="ECO:0000250" key="1">
    <source>
        <dbReference type="UniProtKB" id="Q6DKK2"/>
    </source>
</evidence>
<evidence type="ECO:0000250" key="2">
    <source>
        <dbReference type="UniProtKB" id="Q8CC21"/>
    </source>
</evidence>
<evidence type="ECO:0000255" key="3"/>
<evidence type="ECO:0000305" key="4"/>
<dbReference type="EMBL" id="CH473948">
    <property type="protein sequence ID" value="EDM04701.1"/>
    <property type="molecule type" value="Genomic_DNA"/>
</dbReference>
<dbReference type="EMBL" id="CH473948">
    <property type="protein sequence ID" value="EDM04702.1"/>
    <property type="molecule type" value="Genomic_DNA"/>
</dbReference>
<dbReference type="RefSeq" id="NP_001103114.1">
    <molecule id="D4A6D7-2"/>
    <property type="nucleotide sequence ID" value="NM_001109644.2"/>
</dbReference>
<dbReference type="RefSeq" id="NP_001402701.1">
    <molecule id="D4A6D7-1"/>
    <property type="nucleotide sequence ID" value="NM_001415772.1"/>
</dbReference>
<dbReference type="RefSeq" id="XP_006246592.1">
    <property type="nucleotide sequence ID" value="XM_006246530.3"/>
</dbReference>
<dbReference type="SMR" id="D4A6D7"/>
<dbReference type="FunCoup" id="D4A6D7">
    <property type="interactions" value="2420"/>
</dbReference>
<dbReference type="STRING" id="10116.ENSRNOP00000054591"/>
<dbReference type="iPTMnet" id="D4A6D7"/>
<dbReference type="PhosphoSitePlus" id="D4A6D7"/>
<dbReference type="PaxDb" id="10116-ENSRNOP00000054591"/>
<dbReference type="PeptideAtlas" id="D4A6D7"/>
<dbReference type="Ensembl" id="ENSRNOT00000057777.3">
    <molecule id="D4A6D7-2"/>
    <property type="protein sequence ID" value="ENSRNOP00000054591.2"/>
    <property type="gene ID" value="ENSRNOG00000002977.7"/>
</dbReference>
<dbReference type="Ensembl" id="ENSRNOT00000112760.1">
    <molecule id="D4A6D7-1"/>
    <property type="protein sequence ID" value="ENSRNOP00000083047.1"/>
    <property type="gene ID" value="ENSRNOG00000002977.7"/>
</dbReference>
<dbReference type="GeneID" id="691506"/>
<dbReference type="KEGG" id="rno:691506"/>
<dbReference type="UCSC" id="RGD:1582808">
    <molecule id="D4A6D7-1"/>
    <property type="organism name" value="rat"/>
</dbReference>
<dbReference type="AGR" id="RGD:1582808"/>
<dbReference type="CTD" id="54902"/>
<dbReference type="RGD" id="1582808">
    <property type="gene designation" value="Ttc19"/>
</dbReference>
<dbReference type="eggNOG" id="KOG1840">
    <property type="taxonomic scope" value="Eukaryota"/>
</dbReference>
<dbReference type="GeneTree" id="ENSGT00390000009194"/>
<dbReference type="HOGENOM" id="CLU_057135_1_0_1"/>
<dbReference type="InParanoid" id="D4A6D7"/>
<dbReference type="OrthoDB" id="5986190at2759"/>
<dbReference type="PhylomeDB" id="D4A6D7"/>
<dbReference type="TreeFam" id="TF314010"/>
<dbReference type="Reactome" id="R-RNO-9865881">
    <property type="pathway name" value="Complex III assembly"/>
</dbReference>
<dbReference type="PRO" id="PR:D4A6D7"/>
<dbReference type="Proteomes" id="UP000002494">
    <property type="component" value="Chromosome 10"/>
</dbReference>
<dbReference type="Proteomes" id="UP000234681">
    <property type="component" value="Chromosome 10"/>
</dbReference>
<dbReference type="Bgee" id="ENSRNOG00000002977">
    <property type="expression patterns" value="Expressed in skeletal muscle tissue and 20 other cell types or tissues"/>
</dbReference>
<dbReference type="GO" id="GO:0005743">
    <property type="term" value="C:mitochondrial inner membrane"/>
    <property type="evidence" value="ECO:0000250"/>
    <property type="project" value="UniProtKB"/>
</dbReference>
<dbReference type="GO" id="GO:0051301">
    <property type="term" value="P:cell division"/>
    <property type="evidence" value="ECO:0007669"/>
    <property type="project" value="UniProtKB-KW"/>
</dbReference>
<dbReference type="GO" id="GO:0034551">
    <property type="term" value="P:mitochondrial respiratory chain complex III assembly"/>
    <property type="evidence" value="ECO:0000250"/>
    <property type="project" value="UniProtKB"/>
</dbReference>
<dbReference type="FunFam" id="1.25.40.10:FF:000240">
    <property type="entry name" value="Tetratricopeptide repeat protein 19, mitochondrial"/>
    <property type="match status" value="1"/>
</dbReference>
<dbReference type="Gene3D" id="1.25.40.10">
    <property type="entry name" value="Tetratricopeptide repeat domain"/>
    <property type="match status" value="1"/>
</dbReference>
<dbReference type="InterPro" id="IPR011990">
    <property type="entry name" value="TPR-like_helical_dom_sf"/>
</dbReference>
<dbReference type="InterPro" id="IPR019734">
    <property type="entry name" value="TPR_rpt"/>
</dbReference>
<dbReference type="InterPro" id="IPR040395">
    <property type="entry name" value="TTC19"/>
</dbReference>
<dbReference type="PANTHER" id="PTHR13143">
    <property type="entry name" value="TETRATRICOPEPTIDE REPEAT PROTEIN 19"/>
    <property type="match status" value="1"/>
</dbReference>
<dbReference type="PANTHER" id="PTHR13143:SF6">
    <property type="entry name" value="TETRATRICOPEPTIDE REPEAT PROTEIN 19, MITOCHONDRIAL"/>
    <property type="match status" value="1"/>
</dbReference>
<dbReference type="Pfam" id="PF13374">
    <property type="entry name" value="TPR_10"/>
    <property type="match status" value="1"/>
</dbReference>
<dbReference type="Pfam" id="PF13424">
    <property type="entry name" value="TPR_12"/>
    <property type="match status" value="1"/>
</dbReference>
<dbReference type="SMART" id="SM00028">
    <property type="entry name" value="TPR"/>
    <property type="match status" value="4"/>
</dbReference>
<dbReference type="SUPFAM" id="SSF48452">
    <property type="entry name" value="TPR-like"/>
    <property type="match status" value="1"/>
</dbReference>
<dbReference type="PROSITE" id="PS50293">
    <property type="entry name" value="TPR_REGION"/>
    <property type="match status" value="1"/>
</dbReference>
<name>TTC19_RAT</name>
<sequence>MFRLLRWRLGRTLLRAAGRRCGGCTARLLPERAGDAGPGAERLRTRGAPARGHRVLPLLAALAWFSRTAAAEEQPGEDATDEAEAEIIQLLKRAKLSIMKDEPEAAELILHDALRLAYESDNKKAITYTYDLMANLAFIRGQLENAEQLFKATMSYLLGGGMKQEDNAIVEISLKLANIYAAQNKQEFALAGYEFCISTLEGKIEREKELAEDIMSEERANTYLLLGMCLDSCARYLLFSKQLSQAQRMYEKALQICQEIQGERHPQTIVLMSDLATALDAQGHFDDAYIYMQRASDLAREINHPELHMVLSNLAAILIHRERYTQAKEIYQEALKQAELKRDEFSVQHIREELAELSRKSRLLT</sequence>
<gene>
    <name type="primary">Ttc19</name>
</gene>
<organism>
    <name type="scientific">Rattus norvegicus</name>
    <name type="common">Rat</name>
    <dbReference type="NCBI Taxonomy" id="10116"/>
    <lineage>
        <taxon>Eukaryota</taxon>
        <taxon>Metazoa</taxon>
        <taxon>Chordata</taxon>
        <taxon>Craniata</taxon>
        <taxon>Vertebrata</taxon>
        <taxon>Euteleostomi</taxon>
        <taxon>Mammalia</taxon>
        <taxon>Eutheria</taxon>
        <taxon>Euarchontoglires</taxon>
        <taxon>Glires</taxon>
        <taxon>Rodentia</taxon>
        <taxon>Myomorpha</taxon>
        <taxon>Muroidea</taxon>
        <taxon>Muridae</taxon>
        <taxon>Murinae</taxon>
        <taxon>Rattus</taxon>
    </lineage>
</organism>
<keyword id="KW-0025">Alternative splicing</keyword>
<keyword id="KW-0131">Cell cycle</keyword>
<keyword id="KW-0132">Cell division</keyword>
<keyword id="KW-0249">Electron transport</keyword>
<keyword id="KW-0472">Membrane</keyword>
<keyword id="KW-0496">Mitochondrion</keyword>
<keyword id="KW-0999">Mitochondrion inner membrane</keyword>
<keyword id="KW-1185">Reference proteome</keyword>
<keyword id="KW-0677">Repeat</keyword>
<keyword id="KW-0679">Respiratory chain</keyword>
<keyword id="KW-0802">TPR repeat</keyword>
<keyword id="KW-0809">Transit peptide</keyword>
<keyword id="KW-0813">Transport</keyword>